<reference key="1">
    <citation type="submission" date="2005-11" db="EMBL/GenBank/DDBJ databases">
        <title>Isolation and characterization of CmTCTP from Cucurbita maxima.</title>
        <authorList>
            <person name="Hinojosa-Moya J.J."/>
            <person name="Lucas W.J."/>
            <person name="Xoconostle-Cazares B."/>
            <person name="Ruiz-Medrano R."/>
        </authorList>
    </citation>
    <scope>NUCLEOTIDE SEQUENCE [MRNA]</scope>
</reference>
<dbReference type="EMBL" id="DQ304537">
    <property type="protein sequence ID" value="ABC02401.1"/>
    <property type="molecule type" value="mRNA"/>
</dbReference>
<dbReference type="SMR" id="Q2PS27"/>
<dbReference type="Proteomes" id="UP000504608">
    <property type="component" value="Unplaced"/>
</dbReference>
<dbReference type="GO" id="GO:0005737">
    <property type="term" value="C:cytoplasm"/>
    <property type="evidence" value="ECO:0007669"/>
    <property type="project" value="UniProtKB-SubCell"/>
</dbReference>
<dbReference type="GO" id="GO:0005509">
    <property type="term" value="F:calcium ion binding"/>
    <property type="evidence" value="ECO:0007669"/>
    <property type="project" value="TreeGrafter"/>
</dbReference>
<dbReference type="FunFam" id="2.170.150.10:FF:000003">
    <property type="entry name" value="Translationally-controlled tumor protein homolog"/>
    <property type="match status" value="1"/>
</dbReference>
<dbReference type="Gene3D" id="2.170.150.10">
    <property type="entry name" value="Metal Binding Protein, Guanine Nucleotide Exchange Factor, Chain A"/>
    <property type="match status" value="1"/>
</dbReference>
<dbReference type="InterPro" id="IPR011057">
    <property type="entry name" value="Mss4-like_sf"/>
</dbReference>
<dbReference type="InterPro" id="IPR011323">
    <property type="entry name" value="Mss4/transl-control_tumour"/>
</dbReference>
<dbReference type="InterPro" id="IPR034737">
    <property type="entry name" value="TCTP"/>
</dbReference>
<dbReference type="InterPro" id="IPR018103">
    <property type="entry name" value="Translation_control_tumour_CS"/>
</dbReference>
<dbReference type="InterPro" id="IPR018105">
    <property type="entry name" value="Translational_control_tumour_p"/>
</dbReference>
<dbReference type="PANTHER" id="PTHR11991:SF17">
    <property type="entry name" value="TRANSLATIONALLY CONTROLLED TUMOR PROTEIN 2"/>
    <property type="match status" value="1"/>
</dbReference>
<dbReference type="PANTHER" id="PTHR11991">
    <property type="entry name" value="TRANSLATIONALLY CONTROLLED TUMOR PROTEIN-RELATED"/>
    <property type="match status" value="1"/>
</dbReference>
<dbReference type="Pfam" id="PF00838">
    <property type="entry name" value="TCTP"/>
    <property type="match status" value="1"/>
</dbReference>
<dbReference type="PRINTS" id="PR01653">
    <property type="entry name" value="TCTPROTEIN"/>
</dbReference>
<dbReference type="SUPFAM" id="SSF51316">
    <property type="entry name" value="Mss4-like"/>
    <property type="match status" value="1"/>
</dbReference>
<dbReference type="PROSITE" id="PS01003">
    <property type="entry name" value="TCTP_2"/>
    <property type="match status" value="1"/>
</dbReference>
<dbReference type="PROSITE" id="PS51797">
    <property type="entry name" value="TCTP_3"/>
    <property type="match status" value="1"/>
</dbReference>
<name>TCTP_CUCMA</name>
<feature type="chain" id="PRO_0000252312" description="Translationally-controlled tumor protein homolog">
    <location>
        <begin position="1"/>
        <end position="168"/>
    </location>
</feature>
<feature type="domain" description="TCTP" evidence="2">
    <location>
        <begin position="1"/>
        <end position="168"/>
    </location>
</feature>
<evidence type="ECO:0000250" key="1"/>
<evidence type="ECO:0000255" key="2">
    <source>
        <dbReference type="PROSITE-ProRule" id="PRU01133"/>
    </source>
</evidence>
<protein>
    <recommendedName>
        <fullName>Translationally-controlled tumor protein homolog</fullName>
        <shortName>TCTP</shortName>
    </recommendedName>
    <alternativeName>
        <fullName>CmTCTP</fullName>
    </alternativeName>
</protein>
<organism>
    <name type="scientific">Cucurbita maxima</name>
    <name type="common">Pumpkin</name>
    <name type="synonym">Winter squash</name>
    <dbReference type="NCBI Taxonomy" id="3661"/>
    <lineage>
        <taxon>Eukaryota</taxon>
        <taxon>Viridiplantae</taxon>
        <taxon>Streptophyta</taxon>
        <taxon>Embryophyta</taxon>
        <taxon>Tracheophyta</taxon>
        <taxon>Spermatophyta</taxon>
        <taxon>Magnoliopsida</taxon>
        <taxon>eudicotyledons</taxon>
        <taxon>Gunneridae</taxon>
        <taxon>Pentapetalae</taxon>
        <taxon>rosids</taxon>
        <taxon>fabids</taxon>
        <taxon>Cucurbitales</taxon>
        <taxon>Cucurbitaceae</taxon>
        <taxon>Cucurbiteae</taxon>
        <taxon>Cucurbita</taxon>
    </lineage>
</organism>
<accession>Q2PS27</accession>
<keyword id="KW-0106">Calcium</keyword>
<keyword id="KW-0963">Cytoplasm</keyword>
<keyword id="KW-1185">Reference proteome</keyword>
<proteinExistence type="evidence at transcript level"/>
<gene>
    <name type="primary">TCTP</name>
</gene>
<sequence>MLVYQDLLTGDELLSDSFPYKELENGMIWEVEGKWVVQGAVDVDIGANPSAEGDGEDEGVDDQAVKVVDIVDTFRLQEQPTMDKKQFIAYIKKFIKLLTPKLEGEKQEAFKKNIEGATKFLLPKLKDFRFFVGESMHDDSCIVFAYYREGATDPTFLYLAPALKEVKC</sequence>
<comment type="function">
    <text evidence="1">Involved in calcium binding and microtubule stabilization.</text>
</comment>
<comment type="subcellular location">
    <subcellularLocation>
        <location evidence="1">Cytoplasm</location>
    </subcellularLocation>
</comment>
<comment type="similarity">
    <text evidence="2">Belongs to the TCTP family.</text>
</comment>